<feature type="signal peptide" evidence="2">
    <location>
        <begin position="1"/>
        <end position="19"/>
    </location>
</feature>
<feature type="chain" id="PRO_0000298932" description="Oncoprotein-induced transcript 3 protein">
    <location>
        <begin position="20"/>
        <end position="546"/>
    </location>
</feature>
<feature type="domain" description="EGF-like; calcium-binding" evidence="2">
    <location>
        <begin position="182"/>
        <end position="222"/>
    </location>
</feature>
<feature type="domain" description="ZP" evidence="3">
    <location>
        <begin position="261"/>
        <end position="516"/>
    </location>
</feature>
<feature type="glycosylation site" description="N-linked (GlcNAc...) asparagine" evidence="2">
    <location>
        <position position="89"/>
    </location>
</feature>
<feature type="glycosylation site" description="N-linked (GlcNAc...) asparagine" evidence="2">
    <location>
        <position position="116"/>
    </location>
</feature>
<feature type="glycosylation site" description="N-linked (GlcNAc...) asparagine" evidence="2">
    <location>
        <position position="299"/>
    </location>
</feature>
<feature type="disulfide bond" evidence="1">
    <location>
        <begin position="186"/>
        <end position="197"/>
    </location>
</feature>
<feature type="disulfide bond" evidence="1">
    <location>
        <begin position="193"/>
        <end position="206"/>
    </location>
</feature>
<feature type="disulfide bond" evidence="1">
    <location>
        <begin position="208"/>
        <end position="221"/>
    </location>
</feature>
<feature type="splice variant" id="VSP_027484" description="In isoform 2." evidence="6">
    <location>
        <begin position="1"/>
        <end position="54"/>
    </location>
</feature>
<feature type="sequence conflict" description="In Ref. 2; AAO22058." evidence="7" ref="2">
    <original>P</original>
    <variation>S</variation>
    <location>
        <position position="2"/>
    </location>
</feature>
<feature type="sequence conflict" description="In Ref. 2; AAL86587." evidence="7" ref="2">
    <original>S</original>
    <variation>I</variation>
    <location>
        <position position="271"/>
    </location>
</feature>
<feature type="sequence conflict" description="In Ref. 2; AAL86587." evidence="7" ref="2">
    <original>E</original>
    <variation>D</variation>
    <location>
        <position position="446"/>
    </location>
</feature>
<feature type="sequence conflict" description="In Ref. 3; AAM77901/AAM77638." evidence="7" ref="3">
    <original>R</original>
    <variation>H</variation>
    <location>
        <position position="496"/>
    </location>
</feature>
<protein>
    <recommendedName>
        <fullName>Oncoprotein-induced transcript 3 protein</fullName>
    </recommendedName>
    <alternativeName>
        <fullName>Liver-specific zona pellucida domain-containing protein</fullName>
    </alternativeName>
</protein>
<comment type="function">
    <text evidence="1">May be involved in hepatocellular function and development.</text>
</comment>
<comment type="subcellular location">
    <subcellularLocation>
        <location evidence="5">Nucleus envelope</location>
    </subcellularLocation>
    <text>Secreted into blood in a truncated form.</text>
</comment>
<comment type="alternative products">
    <event type="alternative splicing"/>
    <isoform>
        <id>Q8R4V5-1</id>
        <name>1</name>
        <sequence type="displayed"/>
    </isoform>
    <isoform>
        <id>Q8R4V5-2</id>
        <name>2</name>
        <sequence type="described" ref="VSP_027484"/>
    </isoform>
</comment>
<comment type="tissue specificity">
    <text evidence="4 5">Liver-specific. Expressed only in the hepatocytes.</text>
</comment>
<comment type="developmental stage">
    <text evidence="4">Expression begins as early as 6.5 dpc and very early in fetal liver (at least from 11.5 dpc). Expression level changes in different developmental stages. Levels decrease to a minimal level at 17.5 dpc and then increase gradually to the maximal level at about 7 days after birth.</text>
</comment>
<organism>
    <name type="scientific">Mus musculus</name>
    <name type="common">Mouse</name>
    <dbReference type="NCBI Taxonomy" id="10090"/>
    <lineage>
        <taxon>Eukaryota</taxon>
        <taxon>Metazoa</taxon>
        <taxon>Chordata</taxon>
        <taxon>Craniata</taxon>
        <taxon>Vertebrata</taxon>
        <taxon>Euteleostomi</taxon>
        <taxon>Mammalia</taxon>
        <taxon>Eutheria</taxon>
        <taxon>Euarchontoglires</taxon>
        <taxon>Glires</taxon>
        <taxon>Rodentia</taxon>
        <taxon>Myomorpha</taxon>
        <taxon>Muroidea</taxon>
        <taxon>Muridae</taxon>
        <taxon>Murinae</taxon>
        <taxon>Mus</taxon>
        <taxon>Mus</taxon>
    </lineage>
</organism>
<reference key="1">
    <citation type="journal article" date="2003" name="Hepatology">
        <title>A novel liver-specific zona pellucida domain containing protein that is expressed rarely in hepatocellular carcinoma.</title>
        <authorList>
            <person name="Xu Z.-G."/>
            <person name="Du J.-J."/>
            <person name="Zhang X."/>
            <person name="Cheng Z.-H."/>
            <person name="Ma Z.-Z."/>
            <person name="Xiao H.-S."/>
            <person name="Yu L."/>
            <person name="Wang Z.-Q."/>
            <person name="Li Y.-Y."/>
            <person name="Huo K.-K."/>
            <person name="Han Z.-G."/>
        </authorList>
    </citation>
    <scope>NUCLEOTIDE SEQUENCE [MRNA] (ISOFORM 1)</scope>
    <scope>TISSUE SPECIFICITY</scope>
    <scope>DEVELOPMENTAL STAGE</scope>
    <source>
        <tissue>Liver</tissue>
    </source>
</reference>
<reference key="2">
    <citation type="journal article" date="2004" name="DNA Seq.">
        <title>Identification of LZP gene from Mus musculus and Rattus norvegicus coding for a novel liver-specific ZP domain-containing secretory protein.</title>
        <authorList>
            <person name="Xu Z.-G."/>
            <person name="Du J.-J."/>
            <person name="Cui S.J."/>
            <person name="Wang Z.-Q."/>
            <person name="Huo K.-K."/>
            <person name="Li Y.-Y."/>
            <person name="Han Z.-G."/>
        </authorList>
    </citation>
    <scope>NUCLEOTIDE SEQUENCE [MRNA] (ISOFORM 1)</scope>
    <scope>SUBCELLULAR LOCATION</scope>
    <scope>TISSUE SPECIFICITY</scope>
    <source>
        <tissue>Liver</tissue>
    </source>
</reference>
<reference key="3">
    <citation type="submission" date="2002-05" db="EMBL/GenBank/DDBJ databases">
        <title>E2a-PBX1 mediates target gene expression through LDSF motif dependent and independent mechanisms in 3T3 fibroblasts.</title>
        <authorList>
            <person name="Kolanczyk M.K."/>
            <person name="Gantert M.P."/>
            <person name="Zemojtel T."/>
            <person name="Sykes D.B."/>
            <person name="Kamps M.P."/>
            <person name="Scheele J.S."/>
        </authorList>
    </citation>
    <scope>NUCLEOTIDE SEQUENCE [MRNA] (ISOFORM 2)</scope>
</reference>
<reference key="4">
    <citation type="journal article" date="2005" name="Science">
        <title>The transcriptional landscape of the mammalian genome.</title>
        <authorList>
            <person name="Carninci P."/>
            <person name="Kasukawa T."/>
            <person name="Katayama S."/>
            <person name="Gough J."/>
            <person name="Frith M.C."/>
            <person name="Maeda N."/>
            <person name="Oyama R."/>
            <person name="Ravasi T."/>
            <person name="Lenhard B."/>
            <person name="Wells C."/>
            <person name="Kodzius R."/>
            <person name="Shimokawa K."/>
            <person name="Bajic V.B."/>
            <person name="Brenner S.E."/>
            <person name="Batalov S."/>
            <person name="Forrest A.R."/>
            <person name="Zavolan M."/>
            <person name="Davis M.J."/>
            <person name="Wilming L.G."/>
            <person name="Aidinis V."/>
            <person name="Allen J.E."/>
            <person name="Ambesi-Impiombato A."/>
            <person name="Apweiler R."/>
            <person name="Aturaliya R.N."/>
            <person name="Bailey T.L."/>
            <person name="Bansal M."/>
            <person name="Baxter L."/>
            <person name="Beisel K.W."/>
            <person name="Bersano T."/>
            <person name="Bono H."/>
            <person name="Chalk A.M."/>
            <person name="Chiu K.P."/>
            <person name="Choudhary V."/>
            <person name="Christoffels A."/>
            <person name="Clutterbuck D.R."/>
            <person name="Crowe M.L."/>
            <person name="Dalla E."/>
            <person name="Dalrymple B.P."/>
            <person name="de Bono B."/>
            <person name="Della Gatta G."/>
            <person name="di Bernardo D."/>
            <person name="Down T."/>
            <person name="Engstrom P."/>
            <person name="Fagiolini M."/>
            <person name="Faulkner G."/>
            <person name="Fletcher C.F."/>
            <person name="Fukushima T."/>
            <person name="Furuno M."/>
            <person name="Futaki S."/>
            <person name="Gariboldi M."/>
            <person name="Georgii-Hemming P."/>
            <person name="Gingeras T.R."/>
            <person name="Gojobori T."/>
            <person name="Green R.E."/>
            <person name="Gustincich S."/>
            <person name="Harbers M."/>
            <person name="Hayashi Y."/>
            <person name="Hensch T.K."/>
            <person name="Hirokawa N."/>
            <person name="Hill D."/>
            <person name="Huminiecki L."/>
            <person name="Iacono M."/>
            <person name="Ikeo K."/>
            <person name="Iwama A."/>
            <person name="Ishikawa T."/>
            <person name="Jakt M."/>
            <person name="Kanapin A."/>
            <person name="Katoh M."/>
            <person name="Kawasawa Y."/>
            <person name="Kelso J."/>
            <person name="Kitamura H."/>
            <person name="Kitano H."/>
            <person name="Kollias G."/>
            <person name="Krishnan S.P."/>
            <person name="Kruger A."/>
            <person name="Kummerfeld S.K."/>
            <person name="Kurochkin I.V."/>
            <person name="Lareau L.F."/>
            <person name="Lazarevic D."/>
            <person name="Lipovich L."/>
            <person name="Liu J."/>
            <person name="Liuni S."/>
            <person name="McWilliam S."/>
            <person name="Madan Babu M."/>
            <person name="Madera M."/>
            <person name="Marchionni L."/>
            <person name="Matsuda H."/>
            <person name="Matsuzawa S."/>
            <person name="Miki H."/>
            <person name="Mignone F."/>
            <person name="Miyake S."/>
            <person name="Morris K."/>
            <person name="Mottagui-Tabar S."/>
            <person name="Mulder N."/>
            <person name="Nakano N."/>
            <person name="Nakauchi H."/>
            <person name="Ng P."/>
            <person name="Nilsson R."/>
            <person name="Nishiguchi S."/>
            <person name="Nishikawa S."/>
            <person name="Nori F."/>
            <person name="Ohara O."/>
            <person name="Okazaki Y."/>
            <person name="Orlando V."/>
            <person name="Pang K.C."/>
            <person name="Pavan W.J."/>
            <person name="Pavesi G."/>
            <person name="Pesole G."/>
            <person name="Petrovsky N."/>
            <person name="Piazza S."/>
            <person name="Reed J."/>
            <person name="Reid J.F."/>
            <person name="Ring B.Z."/>
            <person name="Ringwald M."/>
            <person name="Rost B."/>
            <person name="Ruan Y."/>
            <person name="Salzberg S.L."/>
            <person name="Sandelin A."/>
            <person name="Schneider C."/>
            <person name="Schoenbach C."/>
            <person name="Sekiguchi K."/>
            <person name="Semple C.A."/>
            <person name="Seno S."/>
            <person name="Sessa L."/>
            <person name="Sheng Y."/>
            <person name="Shibata Y."/>
            <person name="Shimada H."/>
            <person name="Shimada K."/>
            <person name="Silva D."/>
            <person name="Sinclair B."/>
            <person name="Sperling S."/>
            <person name="Stupka E."/>
            <person name="Sugiura K."/>
            <person name="Sultana R."/>
            <person name="Takenaka Y."/>
            <person name="Taki K."/>
            <person name="Tammoja K."/>
            <person name="Tan S.L."/>
            <person name="Tang S."/>
            <person name="Taylor M.S."/>
            <person name="Tegner J."/>
            <person name="Teichmann S.A."/>
            <person name="Ueda H.R."/>
            <person name="van Nimwegen E."/>
            <person name="Verardo R."/>
            <person name="Wei C.L."/>
            <person name="Yagi K."/>
            <person name="Yamanishi H."/>
            <person name="Zabarovsky E."/>
            <person name="Zhu S."/>
            <person name="Zimmer A."/>
            <person name="Hide W."/>
            <person name="Bult C."/>
            <person name="Grimmond S.M."/>
            <person name="Teasdale R.D."/>
            <person name="Liu E.T."/>
            <person name="Brusic V."/>
            <person name="Quackenbush J."/>
            <person name="Wahlestedt C."/>
            <person name="Mattick J.S."/>
            <person name="Hume D.A."/>
            <person name="Kai C."/>
            <person name="Sasaki D."/>
            <person name="Tomaru Y."/>
            <person name="Fukuda S."/>
            <person name="Kanamori-Katayama M."/>
            <person name="Suzuki M."/>
            <person name="Aoki J."/>
            <person name="Arakawa T."/>
            <person name="Iida J."/>
            <person name="Imamura K."/>
            <person name="Itoh M."/>
            <person name="Kato T."/>
            <person name="Kawaji H."/>
            <person name="Kawagashira N."/>
            <person name="Kawashima T."/>
            <person name="Kojima M."/>
            <person name="Kondo S."/>
            <person name="Konno H."/>
            <person name="Nakano K."/>
            <person name="Ninomiya N."/>
            <person name="Nishio T."/>
            <person name="Okada M."/>
            <person name="Plessy C."/>
            <person name="Shibata K."/>
            <person name="Shiraki T."/>
            <person name="Suzuki S."/>
            <person name="Tagami M."/>
            <person name="Waki K."/>
            <person name="Watahiki A."/>
            <person name="Okamura-Oho Y."/>
            <person name="Suzuki H."/>
            <person name="Kawai J."/>
            <person name="Hayashizaki Y."/>
        </authorList>
    </citation>
    <scope>NUCLEOTIDE SEQUENCE [LARGE SCALE MRNA] (ISOFORM 1)</scope>
    <source>
        <strain>C57BL/6J</strain>
        <tissue>Thymus</tissue>
    </source>
</reference>
<dbReference type="EMBL" id="AF356506">
    <property type="protein sequence ID" value="AAL86587.1"/>
    <property type="molecule type" value="mRNA"/>
</dbReference>
<dbReference type="EMBL" id="AY180915">
    <property type="protein sequence ID" value="AAO22058.1"/>
    <property type="molecule type" value="mRNA"/>
</dbReference>
<dbReference type="EMBL" id="AF517106">
    <property type="protein sequence ID" value="AAM77901.1"/>
    <property type="molecule type" value="mRNA"/>
</dbReference>
<dbReference type="EMBL" id="AF517107">
    <property type="protein sequence ID" value="AAM77638.1"/>
    <property type="molecule type" value="mRNA"/>
</dbReference>
<dbReference type="EMBL" id="AK040570">
    <property type="protein sequence ID" value="BAC30631.1"/>
    <property type="molecule type" value="mRNA"/>
</dbReference>
<dbReference type="CCDS" id="CCDS23865.1">
    <molecule id="Q8R4V5-1"/>
</dbReference>
<dbReference type="RefSeq" id="NP_035089.1">
    <molecule id="Q8R4V5-1"/>
    <property type="nucleotide sequence ID" value="NM_010959.2"/>
</dbReference>
<dbReference type="SMR" id="Q8R4V5"/>
<dbReference type="FunCoup" id="Q8R4V5">
    <property type="interactions" value="33"/>
</dbReference>
<dbReference type="STRING" id="10090.ENSMUSP00000009798"/>
<dbReference type="GlyCosmos" id="Q8R4V5">
    <property type="glycosylation" value="3 sites, No reported glycans"/>
</dbReference>
<dbReference type="GlyGen" id="Q8R4V5">
    <property type="glycosylation" value="3 sites"/>
</dbReference>
<dbReference type="PhosphoSitePlus" id="Q8R4V5"/>
<dbReference type="PaxDb" id="10090-ENSMUSP00000009798"/>
<dbReference type="ProteomicsDB" id="293499">
    <molecule id="Q8R4V5-1"/>
</dbReference>
<dbReference type="ProteomicsDB" id="293500">
    <molecule id="Q8R4V5-2"/>
</dbReference>
<dbReference type="Antibodypedia" id="29281">
    <property type="antibodies" value="113 antibodies from 20 providers"/>
</dbReference>
<dbReference type="DNASU" id="18302"/>
<dbReference type="Ensembl" id="ENSMUST00000009798.5">
    <molecule id="Q8R4V5-1"/>
    <property type="protein sequence ID" value="ENSMUSP00000009798.5"/>
    <property type="gene ID" value="ENSMUSG00000009654.5"/>
</dbReference>
<dbReference type="GeneID" id="18302"/>
<dbReference type="KEGG" id="mmu:18302"/>
<dbReference type="UCSC" id="uc007fdr.1">
    <molecule id="Q8R4V5-1"/>
    <property type="organism name" value="mouse"/>
</dbReference>
<dbReference type="AGR" id="MGI:1201782"/>
<dbReference type="CTD" id="170392"/>
<dbReference type="MGI" id="MGI:1201782">
    <property type="gene designation" value="Oit3"/>
</dbReference>
<dbReference type="VEuPathDB" id="HostDB:ENSMUSG00000009654"/>
<dbReference type="eggNOG" id="ENOG502QW18">
    <property type="taxonomic scope" value="Eukaryota"/>
</dbReference>
<dbReference type="GeneTree" id="ENSGT00940000157851"/>
<dbReference type="HOGENOM" id="CLU_037129_2_0_1"/>
<dbReference type="InParanoid" id="Q8R4V5"/>
<dbReference type="OMA" id="EFPRHYT"/>
<dbReference type="OrthoDB" id="2015116at2759"/>
<dbReference type="PhylomeDB" id="Q8R4V5"/>
<dbReference type="TreeFam" id="TF330284"/>
<dbReference type="BioGRID-ORCS" id="18302">
    <property type="hits" value="2 hits in 78 CRISPR screens"/>
</dbReference>
<dbReference type="ChiTaRS" id="Lyz2">
    <property type="organism name" value="mouse"/>
</dbReference>
<dbReference type="PRO" id="PR:Q8R4V5"/>
<dbReference type="Proteomes" id="UP000000589">
    <property type="component" value="Chromosome 10"/>
</dbReference>
<dbReference type="RNAct" id="Q8R4V5">
    <property type="molecule type" value="protein"/>
</dbReference>
<dbReference type="Bgee" id="ENSMUSG00000009654">
    <property type="expression patterns" value="Expressed in liver and 39 other cell types or tissues"/>
</dbReference>
<dbReference type="GO" id="GO:0005635">
    <property type="term" value="C:nuclear envelope"/>
    <property type="evidence" value="ECO:0007669"/>
    <property type="project" value="UniProtKB-SubCell"/>
</dbReference>
<dbReference type="GO" id="GO:0005509">
    <property type="term" value="F:calcium ion binding"/>
    <property type="evidence" value="ECO:0007669"/>
    <property type="project" value="InterPro"/>
</dbReference>
<dbReference type="GO" id="GO:0003014">
    <property type="term" value="P:renal system process"/>
    <property type="evidence" value="ECO:0000315"/>
    <property type="project" value="MGI"/>
</dbReference>
<dbReference type="FunFam" id="2.10.25.10:FF:000203">
    <property type="entry name" value="oncoprotein-induced transcript 3 protein"/>
    <property type="match status" value="2"/>
</dbReference>
<dbReference type="FunFam" id="2.60.40.3210:FF:000004">
    <property type="entry name" value="oncoprotein-induced transcript 3 protein"/>
    <property type="match status" value="1"/>
</dbReference>
<dbReference type="FunFam" id="2.60.40.4100:FF:000007">
    <property type="entry name" value="oncoprotein-induced transcript 3 protein"/>
    <property type="match status" value="1"/>
</dbReference>
<dbReference type="Gene3D" id="2.10.25.10">
    <property type="entry name" value="Laminin"/>
    <property type="match status" value="2"/>
</dbReference>
<dbReference type="Gene3D" id="2.60.40.4100">
    <property type="entry name" value="Zona pellucida, ZP-C domain"/>
    <property type="match status" value="1"/>
</dbReference>
<dbReference type="Gene3D" id="2.60.40.3210">
    <property type="entry name" value="Zona pellucida, ZP-N domain"/>
    <property type="match status" value="1"/>
</dbReference>
<dbReference type="InterPro" id="IPR001881">
    <property type="entry name" value="EGF-like_Ca-bd_dom"/>
</dbReference>
<dbReference type="InterPro" id="IPR000742">
    <property type="entry name" value="EGF-like_dom"/>
</dbReference>
<dbReference type="InterPro" id="IPR055355">
    <property type="entry name" value="ZP-C"/>
</dbReference>
<dbReference type="InterPro" id="IPR042235">
    <property type="entry name" value="ZP-C_dom"/>
</dbReference>
<dbReference type="InterPro" id="IPR055356">
    <property type="entry name" value="ZP-N"/>
</dbReference>
<dbReference type="InterPro" id="IPR048290">
    <property type="entry name" value="ZP_chr"/>
</dbReference>
<dbReference type="InterPro" id="IPR001507">
    <property type="entry name" value="ZP_dom"/>
</dbReference>
<dbReference type="PANTHER" id="PTHR14002">
    <property type="entry name" value="ENDOGLIN/TGF-BETA RECEPTOR TYPE III"/>
    <property type="match status" value="1"/>
</dbReference>
<dbReference type="PANTHER" id="PTHR14002:SF18">
    <property type="entry name" value="ONCOPROTEIN-INDUCED TRANSCRIPT 3 PROTEIN"/>
    <property type="match status" value="1"/>
</dbReference>
<dbReference type="Pfam" id="PF23283">
    <property type="entry name" value="D8C_UMOD"/>
    <property type="match status" value="1"/>
</dbReference>
<dbReference type="Pfam" id="PF14670">
    <property type="entry name" value="FXa_inhibition"/>
    <property type="match status" value="2"/>
</dbReference>
<dbReference type="Pfam" id="PF00100">
    <property type="entry name" value="Zona_pellucida"/>
    <property type="match status" value="1"/>
</dbReference>
<dbReference type="Pfam" id="PF23344">
    <property type="entry name" value="ZP-N"/>
    <property type="match status" value="1"/>
</dbReference>
<dbReference type="PRINTS" id="PR00023">
    <property type="entry name" value="ZPELLUCIDA"/>
</dbReference>
<dbReference type="SMART" id="SM00181">
    <property type="entry name" value="EGF"/>
    <property type="match status" value="3"/>
</dbReference>
<dbReference type="SMART" id="SM00179">
    <property type="entry name" value="EGF_CA"/>
    <property type="match status" value="2"/>
</dbReference>
<dbReference type="SMART" id="SM00241">
    <property type="entry name" value="ZP"/>
    <property type="match status" value="1"/>
</dbReference>
<dbReference type="SUPFAM" id="SSF57196">
    <property type="entry name" value="EGF/Laminin"/>
    <property type="match status" value="2"/>
</dbReference>
<dbReference type="PROSITE" id="PS51034">
    <property type="entry name" value="ZP_2"/>
    <property type="match status" value="1"/>
</dbReference>
<accession>Q8R4V5</accession>
<accession>P97806</accession>
<accession>Q811T0</accession>
<accession>Q8C9U1</accession>
<sequence length="546" mass="60316">MPLSLLLTCLSTTVTLVSPAVLDPCSAYISLNEPWRNTDHQFDESQNQPLCDNHMNGEWYRFTGMAGDAMPTFCIPENHCGTHAPVWLNGSHPLEEDGIVQRQACASFKGNCCLWNATVEVKACPRGYYVYRLARPSVCFHVYCGHFYDICDEDCHGNCLDTTECACSPGTSLGPDGQTCFDENECEHNNGGCSEICVNLKNSHRCACGVGRVLRSDGKTCEDIEGCHNNNGGCSHSCLGSEEGYQCECPRGLVLSEDNHTCQVPVLCKSSAIEVSVPRELVGGLELFLTNTSCRGVSNGTHVNIVFSLKTCGTVVDVVNDKIVASNIVTGLPKETPGSSGDIIIRTSKLLIPVTCEFPRLYTISEGYVPNLRNAPLEIRSRNHGIFPFTLEIFKDHEFEEPYRETLPTLKLRDSLYFGIEPLVHVNGLESLVESCFATPTAKMDEILKYYLIQDGCVSDDSVKQYSSRDHLAKHFQAPVFKFVGKDHKEVFLHCRVLVCGVLDERSRCAQGCHRRVRREVGEDEDSAGLQSQTLTGGPIAIDWED</sequence>
<name>OIT3_MOUSE</name>
<gene>
    <name type="primary">Oit3</name>
    <name type="synonym">Lzp</name>
</gene>
<proteinExistence type="evidence at transcript level"/>
<evidence type="ECO:0000250" key="1"/>
<evidence type="ECO:0000255" key="2"/>
<evidence type="ECO:0000255" key="3">
    <source>
        <dbReference type="PROSITE-ProRule" id="PRU00375"/>
    </source>
</evidence>
<evidence type="ECO:0000269" key="4">
    <source>
    </source>
</evidence>
<evidence type="ECO:0000269" key="5">
    <source>
    </source>
</evidence>
<evidence type="ECO:0000303" key="6">
    <source ref="3"/>
</evidence>
<evidence type="ECO:0000305" key="7"/>
<keyword id="KW-0025">Alternative splicing</keyword>
<keyword id="KW-0106">Calcium</keyword>
<keyword id="KW-1015">Disulfide bond</keyword>
<keyword id="KW-0245">EGF-like domain</keyword>
<keyword id="KW-0325">Glycoprotein</keyword>
<keyword id="KW-0539">Nucleus</keyword>
<keyword id="KW-1185">Reference proteome</keyword>
<keyword id="KW-0732">Signal</keyword>